<reference key="1">
    <citation type="journal article" date="2002" name="Mol. Microbiol.">
        <title>Genome sequence of Streptococcus agalactiae, a pathogen causing invasive neonatal disease.</title>
        <authorList>
            <person name="Glaser P."/>
            <person name="Rusniok C."/>
            <person name="Buchrieser C."/>
            <person name="Chevalier F."/>
            <person name="Frangeul L."/>
            <person name="Msadek T."/>
            <person name="Zouine M."/>
            <person name="Couve E."/>
            <person name="Lalioui L."/>
            <person name="Poyart C."/>
            <person name="Trieu-Cuot P."/>
            <person name="Kunst F."/>
        </authorList>
    </citation>
    <scope>NUCLEOTIDE SEQUENCE [LARGE SCALE GENOMIC DNA]</scope>
    <source>
        <strain>NEM316</strain>
    </source>
</reference>
<gene>
    <name type="ordered locus">gbs1193</name>
</gene>
<evidence type="ECO:0000255" key="1"/>
<evidence type="ECO:0000305" key="2"/>
<accession>Q8E541</accession>
<feature type="chain" id="PRO_0000157459" description="UPF0324 membrane protein gbs1193">
    <location>
        <begin position="1"/>
        <end position="335"/>
    </location>
</feature>
<feature type="transmembrane region" description="Helical" evidence="1">
    <location>
        <begin position="20"/>
        <end position="42"/>
    </location>
</feature>
<feature type="transmembrane region" description="Helical" evidence="1">
    <location>
        <begin position="57"/>
        <end position="79"/>
    </location>
</feature>
<feature type="transmembrane region" description="Helical" evidence="1">
    <location>
        <begin position="84"/>
        <end position="106"/>
    </location>
</feature>
<feature type="transmembrane region" description="Helical" evidence="1">
    <location>
        <begin position="116"/>
        <end position="138"/>
    </location>
</feature>
<feature type="transmembrane region" description="Helical" evidence="1">
    <location>
        <begin position="151"/>
        <end position="173"/>
    </location>
</feature>
<feature type="transmembrane region" description="Helical" evidence="1">
    <location>
        <begin position="210"/>
        <end position="232"/>
    </location>
</feature>
<feature type="transmembrane region" description="Helical" evidence="1">
    <location>
        <begin position="253"/>
        <end position="275"/>
    </location>
</feature>
<feature type="transmembrane region" description="Helical" evidence="1">
    <location>
        <begin position="285"/>
        <end position="304"/>
    </location>
</feature>
<feature type="transmembrane region" description="Helical" evidence="1">
    <location>
        <begin position="311"/>
        <end position="333"/>
    </location>
</feature>
<protein>
    <recommendedName>
        <fullName>UPF0324 membrane protein gbs1193</fullName>
    </recommendedName>
</protein>
<keyword id="KW-1003">Cell membrane</keyword>
<keyword id="KW-0472">Membrane</keyword>
<keyword id="KW-0812">Transmembrane</keyword>
<keyword id="KW-1133">Transmembrane helix</keyword>
<organism>
    <name type="scientific">Streptococcus agalactiae serotype III (strain NEM316)</name>
    <dbReference type="NCBI Taxonomy" id="211110"/>
    <lineage>
        <taxon>Bacteria</taxon>
        <taxon>Bacillati</taxon>
        <taxon>Bacillota</taxon>
        <taxon>Bacilli</taxon>
        <taxon>Lactobacillales</taxon>
        <taxon>Streptococcaceae</taxon>
        <taxon>Streptococcus</taxon>
    </lineage>
</organism>
<dbReference type="EMBL" id="AL766849">
    <property type="protein sequence ID" value="CAD46852.1"/>
    <property type="molecule type" value="Genomic_DNA"/>
</dbReference>
<dbReference type="RefSeq" id="WP_000897651.1">
    <property type="nucleotide sequence ID" value="NC_004368.1"/>
</dbReference>
<dbReference type="KEGG" id="san:gbs1193"/>
<dbReference type="eggNOG" id="COG2855">
    <property type="taxonomic scope" value="Bacteria"/>
</dbReference>
<dbReference type="HOGENOM" id="CLU_033541_2_1_9"/>
<dbReference type="Proteomes" id="UP000000823">
    <property type="component" value="Chromosome"/>
</dbReference>
<dbReference type="GO" id="GO:0005886">
    <property type="term" value="C:plasma membrane"/>
    <property type="evidence" value="ECO:0007669"/>
    <property type="project" value="UniProtKB-SubCell"/>
</dbReference>
<dbReference type="InterPro" id="IPR018383">
    <property type="entry name" value="UPF0324_pro"/>
</dbReference>
<dbReference type="PANTHER" id="PTHR30106">
    <property type="entry name" value="INNER MEMBRANE PROTEIN YEIH-RELATED"/>
    <property type="match status" value="1"/>
</dbReference>
<dbReference type="PANTHER" id="PTHR30106:SF1">
    <property type="entry name" value="UPF0324 MEMBRANE PROTEIN FN0533"/>
    <property type="match status" value="1"/>
</dbReference>
<dbReference type="Pfam" id="PF03601">
    <property type="entry name" value="Cons_hypoth698"/>
    <property type="match status" value="1"/>
</dbReference>
<name>Y1193_STRA3</name>
<comment type="subcellular location">
    <subcellularLocation>
        <location evidence="2">Cell membrane</location>
        <topology evidence="2">Multi-pass membrane protein</topology>
    </subcellularLocation>
</comment>
<comment type="similarity">
    <text evidence="2">Belongs to the UPF0324 family.</text>
</comment>
<sequence>MLFKEKIPGLILCFIIAIPSWLLGLYLPLIGAPVFAILIGIIVGSFYQNRQLFNKGIAFTSKYILQTAVVLLGFGLNLMQVMKVGISSLPIIIMTISISLIIAYVLQKLFKLDKTIATLIGVGSSICGGSAIAATAPVINAKDDEVAQAISVIFLFNILAALIFPTLGNFIGLSDHGFALFAGTAVNDTSSVTATATAWDAINHSNTLGGATIVKLTRTLAIIPITIVLSIYHMKQTQKEQSVSVTKIFPKFVLYFILASLLTTIVASLGFSLRIFEPLKVLSKFFIVMAMGAIGINTNVSKLIKTGGKSILLGAACWLGIIIVSLTMQAILGTW</sequence>
<proteinExistence type="inferred from homology"/>